<accession>Q2J398</accession>
<reference key="1">
    <citation type="submission" date="2006-01" db="EMBL/GenBank/DDBJ databases">
        <title>Complete sequence of Rhodopseudomonas palustris HaA2.</title>
        <authorList>
            <consortium name="US DOE Joint Genome Institute"/>
            <person name="Copeland A."/>
            <person name="Lucas S."/>
            <person name="Lapidus A."/>
            <person name="Barry K."/>
            <person name="Detter J.C."/>
            <person name="Glavina T."/>
            <person name="Hammon N."/>
            <person name="Israni S."/>
            <person name="Pitluck S."/>
            <person name="Chain P."/>
            <person name="Malfatti S."/>
            <person name="Shin M."/>
            <person name="Vergez L."/>
            <person name="Schmutz J."/>
            <person name="Larimer F."/>
            <person name="Land M."/>
            <person name="Hauser L."/>
            <person name="Pelletier D.A."/>
            <person name="Kyrpides N."/>
            <person name="Anderson I."/>
            <person name="Oda Y."/>
            <person name="Harwood C.S."/>
            <person name="Richardson P."/>
        </authorList>
    </citation>
    <scope>NUCLEOTIDE SEQUENCE [LARGE SCALE GENOMIC DNA]</scope>
    <source>
        <strain>HaA2</strain>
    </source>
</reference>
<proteinExistence type="inferred from homology"/>
<dbReference type="EMBL" id="CP000250">
    <property type="protein sequence ID" value="ABD05062.1"/>
    <property type="molecule type" value="Genomic_DNA"/>
</dbReference>
<dbReference type="RefSeq" id="WP_011439252.1">
    <property type="nucleotide sequence ID" value="NC_007778.1"/>
</dbReference>
<dbReference type="SMR" id="Q2J398"/>
<dbReference type="STRING" id="316058.RPB_0351"/>
<dbReference type="KEGG" id="rpb:RPB_0351"/>
<dbReference type="eggNOG" id="COG0806">
    <property type="taxonomic scope" value="Bacteria"/>
</dbReference>
<dbReference type="HOGENOM" id="CLU_077636_0_1_5"/>
<dbReference type="OrthoDB" id="9788191at2"/>
<dbReference type="Proteomes" id="UP000008809">
    <property type="component" value="Chromosome"/>
</dbReference>
<dbReference type="GO" id="GO:0005737">
    <property type="term" value="C:cytoplasm"/>
    <property type="evidence" value="ECO:0007669"/>
    <property type="project" value="UniProtKB-SubCell"/>
</dbReference>
<dbReference type="GO" id="GO:0005840">
    <property type="term" value="C:ribosome"/>
    <property type="evidence" value="ECO:0007669"/>
    <property type="project" value="InterPro"/>
</dbReference>
<dbReference type="GO" id="GO:0043022">
    <property type="term" value="F:ribosome binding"/>
    <property type="evidence" value="ECO:0007669"/>
    <property type="project" value="InterPro"/>
</dbReference>
<dbReference type="GO" id="GO:0042274">
    <property type="term" value="P:ribosomal small subunit biogenesis"/>
    <property type="evidence" value="ECO:0007669"/>
    <property type="project" value="UniProtKB-UniRule"/>
</dbReference>
<dbReference type="GO" id="GO:0006364">
    <property type="term" value="P:rRNA processing"/>
    <property type="evidence" value="ECO:0007669"/>
    <property type="project" value="UniProtKB-UniRule"/>
</dbReference>
<dbReference type="Gene3D" id="2.30.30.240">
    <property type="entry name" value="PRC-barrel domain"/>
    <property type="match status" value="1"/>
</dbReference>
<dbReference type="Gene3D" id="2.40.30.60">
    <property type="entry name" value="RimM"/>
    <property type="match status" value="1"/>
</dbReference>
<dbReference type="HAMAP" id="MF_00014">
    <property type="entry name" value="Ribosome_mat_RimM"/>
    <property type="match status" value="1"/>
</dbReference>
<dbReference type="InterPro" id="IPR011033">
    <property type="entry name" value="PRC_barrel-like_sf"/>
</dbReference>
<dbReference type="InterPro" id="IPR056792">
    <property type="entry name" value="PRC_RimM"/>
</dbReference>
<dbReference type="InterPro" id="IPR011961">
    <property type="entry name" value="RimM"/>
</dbReference>
<dbReference type="InterPro" id="IPR002676">
    <property type="entry name" value="RimM_N"/>
</dbReference>
<dbReference type="InterPro" id="IPR036976">
    <property type="entry name" value="RimM_N_sf"/>
</dbReference>
<dbReference type="InterPro" id="IPR009000">
    <property type="entry name" value="Transl_B-barrel_sf"/>
</dbReference>
<dbReference type="NCBIfam" id="TIGR02273">
    <property type="entry name" value="16S_RimM"/>
    <property type="match status" value="1"/>
</dbReference>
<dbReference type="PANTHER" id="PTHR33692">
    <property type="entry name" value="RIBOSOME MATURATION FACTOR RIMM"/>
    <property type="match status" value="1"/>
</dbReference>
<dbReference type="PANTHER" id="PTHR33692:SF1">
    <property type="entry name" value="RIBOSOME MATURATION FACTOR RIMM"/>
    <property type="match status" value="1"/>
</dbReference>
<dbReference type="Pfam" id="PF24986">
    <property type="entry name" value="PRC_RimM"/>
    <property type="match status" value="1"/>
</dbReference>
<dbReference type="Pfam" id="PF01782">
    <property type="entry name" value="RimM"/>
    <property type="match status" value="1"/>
</dbReference>
<dbReference type="SUPFAM" id="SSF50346">
    <property type="entry name" value="PRC-barrel domain"/>
    <property type="match status" value="1"/>
</dbReference>
<dbReference type="SUPFAM" id="SSF50447">
    <property type="entry name" value="Translation proteins"/>
    <property type="match status" value="1"/>
</dbReference>
<evidence type="ECO:0000255" key="1">
    <source>
        <dbReference type="HAMAP-Rule" id="MF_00014"/>
    </source>
</evidence>
<name>RIMM_RHOP2</name>
<sequence>MPSGPISVARQVCVARIGAPHGVRGAMRLWSFTADPLAVGDYGPLSTKDGTRSFEIATARAAKDHLVVTLKGVTTRDEAVRLNGLELYVPRDALPPTEDDEYYHADLIGLPAITTSGEPLGRVLAIHNFGAGDIIEIAPASGPTLLLPFTNAVVPTVDLAAGQVIIELPAEIEGDTPNHPEA</sequence>
<organism>
    <name type="scientific">Rhodopseudomonas palustris (strain HaA2)</name>
    <dbReference type="NCBI Taxonomy" id="316058"/>
    <lineage>
        <taxon>Bacteria</taxon>
        <taxon>Pseudomonadati</taxon>
        <taxon>Pseudomonadota</taxon>
        <taxon>Alphaproteobacteria</taxon>
        <taxon>Hyphomicrobiales</taxon>
        <taxon>Nitrobacteraceae</taxon>
        <taxon>Rhodopseudomonas</taxon>
    </lineage>
</organism>
<keyword id="KW-0143">Chaperone</keyword>
<keyword id="KW-0963">Cytoplasm</keyword>
<keyword id="KW-1185">Reference proteome</keyword>
<keyword id="KW-0690">Ribosome biogenesis</keyword>
<keyword id="KW-0698">rRNA processing</keyword>
<comment type="function">
    <text evidence="1">An accessory protein needed during the final step in the assembly of 30S ribosomal subunit, possibly for assembly of the head region. Essential for efficient processing of 16S rRNA. May be needed both before and after RbfA during the maturation of 16S rRNA. It has affinity for free ribosomal 30S subunits but not for 70S ribosomes.</text>
</comment>
<comment type="subunit">
    <text evidence="1">Binds ribosomal protein uS19.</text>
</comment>
<comment type="subcellular location">
    <subcellularLocation>
        <location evidence="1">Cytoplasm</location>
    </subcellularLocation>
</comment>
<comment type="domain">
    <text evidence="1">The PRC barrel domain binds ribosomal protein uS19.</text>
</comment>
<comment type="similarity">
    <text evidence="1">Belongs to the RimM family.</text>
</comment>
<protein>
    <recommendedName>
        <fullName evidence="1">Ribosome maturation factor RimM</fullName>
    </recommendedName>
</protein>
<feature type="chain" id="PRO_0000244159" description="Ribosome maturation factor RimM">
    <location>
        <begin position="1"/>
        <end position="182"/>
    </location>
</feature>
<feature type="domain" description="PRC barrel" evidence="1">
    <location>
        <begin position="99"/>
        <end position="176"/>
    </location>
</feature>
<gene>
    <name evidence="1" type="primary">rimM</name>
    <name type="ordered locus">RPB_0351</name>
</gene>